<protein>
    <recommendedName>
        <fullName evidence="1">DNA gyrase subunit B</fullName>
        <ecNumber evidence="1">5.6.2.2</ecNumber>
    </recommendedName>
</protein>
<reference key="1">
    <citation type="journal article" date="1994" name="J. Bacteriol.">
        <title>An unusual gene containing a dnaJ N-terminal box flanks the putative origin of replication of Mycoplasma genitalium.</title>
        <authorList>
            <person name="Bailey C.C."/>
            <person name="Bott K.F."/>
        </authorList>
    </citation>
    <scope>NUCLEOTIDE SEQUENCE [GENOMIC DNA]</scope>
    <source>
        <strain>ATCC 33530 / DSM 19775 / NCTC 10195 / G37</strain>
    </source>
</reference>
<reference key="2">
    <citation type="journal article" date="1995" name="Science">
        <title>The minimal gene complement of Mycoplasma genitalium.</title>
        <authorList>
            <person name="Fraser C.M."/>
            <person name="Gocayne J.D."/>
            <person name="White O."/>
            <person name="Adams M.D."/>
            <person name="Clayton R.A."/>
            <person name="Fleischmann R.D."/>
            <person name="Bult C.J."/>
            <person name="Kerlavage A.R."/>
            <person name="Sutton G.G."/>
            <person name="Kelley J.M."/>
            <person name="Fritchman J.L."/>
            <person name="Weidman J.F."/>
            <person name="Small K.V."/>
            <person name="Sandusky M."/>
            <person name="Fuhrmann J.L."/>
            <person name="Nguyen D.T."/>
            <person name="Utterback T.R."/>
            <person name="Saudek D.M."/>
            <person name="Phillips C.A."/>
            <person name="Merrick J.M."/>
            <person name="Tomb J.-F."/>
            <person name="Dougherty B.A."/>
            <person name="Bott K.F."/>
            <person name="Hu P.-C."/>
            <person name="Lucier T.S."/>
            <person name="Peterson S.N."/>
            <person name="Smith H.O."/>
            <person name="Hutchison C.A. III"/>
            <person name="Venter J.C."/>
        </authorList>
    </citation>
    <scope>NUCLEOTIDE SEQUENCE [LARGE SCALE GENOMIC DNA]</scope>
    <source>
        <strain>ATCC 33530 / DSM 19775 / NCTC 10195 / G37</strain>
    </source>
</reference>
<reference key="3">
    <citation type="journal article" date="1993" name="J. Bacteriol.">
        <title>A survey of the Mycoplasma genitalium genome by using random sequencing.</title>
        <authorList>
            <person name="Peterson S.N."/>
            <person name="Hu P.-C."/>
            <person name="Bott K.F."/>
            <person name="Hutchison C.A. III"/>
        </authorList>
    </citation>
    <scope>NUCLEOTIDE SEQUENCE [GENOMIC DNA] OF 199-304; 404-507 AND 605-650</scope>
    <source>
        <strain>ATCC 33530 / DSM 19775 / NCTC 10195 / G37</strain>
    </source>
</reference>
<name>GYRB_MYCGE</name>
<accession>P47249</accession>
<accession>Q49307</accession>
<proteinExistence type="inferred from homology"/>
<evidence type="ECO:0000255" key="1">
    <source>
        <dbReference type="HAMAP-Rule" id="MF_01898"/>
    </source>
</evidence>
<evidence type="ECO:0000256" key="2">
    <source>
        <dbReference type="SAM" id="MobiDB-lite"/>
    </source>
</evidence>
<organism>
    <name type="scientific">Mycoplasma genitalium (strain ATCC 33530 / DSM 19775 / NCTC 10195 / G37)</name>
    <name type="common">Mycoplasmoides genitalium</name>
    <dbReference type="NCBI Taxonomy" id="243273"/>
    <lineage>
        <taxon>Bacteria</taxon>
        <taxon>Bacillati</taxon>
        <taxon>Mycoplasmatota</taxon>
        <taxon>Mycoplasmoidales</taxon>
        <taxon>Mycoplasmoidaceae</taxon>
        <taxon>Mycoplasmoides</taxon>
    </lineage>
</organism>
<comment type="function">
    <text evidence="1">A type II topoisomerase that negatively supercoils closed circular double-stranded (ds) DNA in an ATP-dependent manner to modulate DNA topology and maintain chromosomes in an underwound state. Negative supercoiling favors strand separation, and DNA replication, transcription, recombination and repair, all of which involve strand separation. Also able to catalyze the interconversion of other topological isomers of dsDNA rings, including catenanes and knotted rings. Type II topoisomerases break and join 2 DNA strands simultaneously in an ATP-dependent manner.</text>
</comment>
<comment type="catalytic activity">
    <reaction evidence="1">
        <text>ATP-dependent breakage, passage and rejoining of double-stranded DNA.</text>
        <dbReference type="EC" id="5.6.2.2"/>
    </reaction>
</comment>
<comment type="cofactor">
    <cofactor evidence="1">
        <name>Mg(2+)</name>
        <dbReference type="ChEBI" id="CHEBI:18420"/>
    </cofactor>
    <cofactor evidence="1">
        <name>Mn(2+)</name>
        <dbReference type="ChEBI" id="CHEBI:29035"/>
    </cofactor>
    <cofactor evidence="1">
        <name>Ca(2+)</name>
        <dbReference type="ChEBI" id="CHEBI:29108"/>
    </cofactor>
    <text evidence="1">Binds two Mg(2+) per subunit. The magnesium ions form salt bridges with both the protein and the DNA. Can also accept other divalent metal cations, such as Mn(2+) or Ca(2+).</text>
</comment>
<comment type="subunit">
    <text evidence="1">Heterotetramer, composed of two GyrA and two GyrB chains. In the heterotetramer, GyrA contains the active site tyrosine that forms a transient covalent intermediate with DNA, while GyrB binds cofactors and catalyzes ATP hydrolysis.</text>
</comment>
<comment type="subcellular location">
    <subcellularLocation>
        <location evidence="1">Cytoplasm</location>
    </subcellularLocation>
</comment>
<comment type="miscellaneous">
    <text evidence="1">Few gyrases are as efficient as E.coli at forming negative supercoils. Not all organisms have 2 type II topoisomerases; in organisms with a single type II topoisomerase this enzyme also has to decatenate newly replicated chromosomes.</text>
</comment>
<comment type="similarity">
    <text evidence="1">Belongs to the type II topoisomerase GyrB family.</text>
</comment>
<sequence length="650" mass="73605">MEENNKANIYDSSSIKVLEGLEAVRKRPGMYIGSTGEEGLHHMIWEIVDNSIDEAMGGFASFVKLTLEDNFVTRVEDDGRGIPVDIHPKTNRSTVETVFTVLHAGGKFDNDSYKVSGGLHGVGASVVNALSSSFKVWVFRQNKKYFLSFSDGGKVIGDLVQEGNSEKEHGTIVEFVPDFSVMEKSDYKQTVIVSRLQQLAFLNKGIRIDFVDNRKQNPQSFSWKYDGGLVEYIHHLNNEKEPLFNEVIADEKTETVKAVNRDENYTVKVEVAFQYNKTYNQSIFSFCNNINTTEGGTHVEGFRNALVKIINRFAVENKFLKDSDEKINRDDVCEGLTAIISIKHPNPQYEGQTKKKLGNTEVRPLVNSVVSEIFERFMLENPQEANAIIRKTLLAQEARRRSQEARELTRRKSPFDSGSLPGKLADCTTRDPSISELYIVEGDSAGGTAKTGRDRYFQAILPLRGKILNVEKSNFEQIFNNAEISALVMAIGCGIKPDFELEKLRYSKIVIMTDADVDGAHIRTLLLTFFFRFMYPLVEQGNIFIAQPPLYKVSYSHKDLYMHTDVQLEQWKSQNPNVKFGLQRYKGLGEMDALQLWETTMDPKVRTLLKVTVEDASIADKAFSLLMGDEVPPRREFIEKNARSVKNIDI</sequence>
<feature type="chain" id="PRO_0000145319" description="DNA gyrase subunit B">
    <location>
        <begin position="1"/>
        <end position="650"/>
    </location>
</feature>
<feature type="domain" description="Toprim" evidence="1">
    <location>
        <begin position="435"/>
        <end position="549"/>
    </location>
</feature>
<feature type="region of interest" description="Disordered" evidence="2">
    <location>
        <begin position="400"/>
        <end position="422"/>
    </location>
</feature>
<feature type="compositionally biased region" description="Basic and acidic residues" evidence="2">
    <location>
        <begin position="400"/>
        <end position="414"/>
    </location>
</feature>
<feature type="binding site" evidence="1">
    <location>
        <position position="441"/>
    </location>
    <ligand>
        <name>Mg(2+)</name>
        <dbReference type="ChEBI" id="CHEBI:18420"/>
        <label>1</label>
        <note>catalytic</note>
    </ligand>
</feature>
<feature type="binding site" evidence="1">
    <location>
        <position position="514"/>
    </location>
    <ligand>
        <name>Mg(2+)</name>
        <dbReference type="ChEBI" id="CHEBI:18420"/>
        <label>1</label>
        <note>catalytic</note>
    </ligand>
</feature>
<feature type="binding site" evidence="1">
    <location>
        <position position="514"/>
    </location>
    <ligand>
        <name>Mg(2+)</name>
        <dbReference type="ChEBI" id="CHEBI:18420"/>
        <label>2</label>
    </ligand>
</feature>
<feature type="binding site" evidence="1">
    <location>
        <position position="516"/>
    </location>
    <ligand>
        <name>Mg(2+)</name>
        <dbReference type="ChEBI" id="CHEBI:18420"/>
        <label>2</label>
    </ligand>
</feature>
<feature type="site" description="Interaction with DNA" evidence="1">
    <location>
        <position position="466"/>
    </location>
</feature>
<feature type="site" description="Interaction with DNA" evidence="1">
    <location>
        <position position="469"/>
    </location>
</feature>
<gene>
    <name evidence="1" type="primary">gyrB</name>
    <name type="ordered locus">MG003</name>
</gene>
<dbReference type="EC" id="5.6.2.2" evidence="1"/>
<dbReference type="EMBL" id="U09251">
    <property type="protein sequence ID" value="AAA57071.1"/>
    <property type="molecule type" value="Genomic_DNA"/>
</dbReference>
<dbReference type="EMBL" id="L43967">
    <property type="protein sequence ID" value="AAC71219.1"/>
    <property type="molecule type" value="Genomic_DNA"/>
</dbReference>
<dbReference type="EMBL" id="U02187">
    <property type="protein sequence ID" value="AAD12471.1"/>
    <property type="molecule type" value="Genomic_DNA"/>
</dbReference>
<dbReference type="EMBL" id="U02199">
    <property type="protein sequence ID" value="AAD12487.1"/>
    <property type="molecule type" value="Genomic_DNA"/>
</dbReference>
<dbReference type="EMBL" id="U02211">
    <property type="protein sequence ID" value="AAD12503.1"/>
    <property type="molecule type" value="Genomic_DNA"/>
</dbReference>
<dbReference type="PIR" id="C64200">
    <property type="entry name" value="C64200"/>
</dbReference>
<dbReference type="RefSeq" id="WP_009885560.1">
    <property type="nucleotide sequence ID" value="NC_000908.2"/>
</dbReference>
<dbReference type="SMR" id="P47249"/>
<dbReference type="FunCoup" id="P47249">
    <property type="interactions" value="169"/>
</dbReference>
<dbReference type="STRING" id="243273.MG_003"/>
<dbReference type="GeneID" id="88282118"/>
<dbReference type="KEGG" id="mge:MG_003"/>
<dbReference type="eggNOG" id="COG0187">
    <property type="taxonomic scope" value="Bacteria"/>
</dbReference>
<dbReference type="HOGENOM" id="CLU_006146_4_1_14"/>
<dbReference type="InParanoid" id="P47249"/>
<dbReference type="OrthoDB" id="9802808at2"/>
<dbReference type="BioCyc" id="MGEN243273:G1GJ2-3-MONOMER"/>
<dbReference type="Proteomes" id="UP000000807">
    <property type="component" value="Chromosome"/>
</dbReference>
<dbReference type="GO" id="GO:0005694">
    <property type="term" value="C:chromosome"/>
    <property type="evidence" value="ECO:0007669"/>
    <property type="project" value="InterPro"/>
</dbReference>
<dbReference type="GO" id="GO:0005737">
    <property type="term" value="C:cytoplasm"/>
    <property type="evidence" value="ECO:0007669"/>
    <property type="project" value="UniProtKB-SubCell"/>
</dbReference>
<dbReference type="GO" id="GO:0005524">
    <property type="term" value="F:ATP binding"/>
    <property type="evidence" value="ECO:0007669"/>
    <property type="project" value="UniProtKB-UniRule"/>
</dbReference>
<dbReference type="GO" id="GO:0003677">
    <property type="term" value="F:DNA binding"/>
    <property type="evidence" value="ECO:0007669"/>
    <property type="project" value="UniProtKB-KW"/>
</dbReference>
<dbReference type="GO" id="GO:0034335">
    <property type="term" value="F:DNA negative supercoiling activity"/>
    <property type="evidence" value="ECO:0007669"/>
    <property type="project" value="UniProtKB-ARBA"/>
</dbReference>
<dbReference type="GO" id="GO:0046872">
    <property type="term" value="F:metal ion binding"/>
    <property type="evidence" value="ECO:0007669"/>
    <property type="project" value="UniProtKB-KW"/>
</dbReference>
<dbReference type="GO" id="GO:0006265">
    <property type="term" value="P:DNA topological change"/>
    <property type="evidence" value="ECO:0007669"/>
    <property type="project" value="UniProtKB-UniRule"/>
</dbReference>
<dbReference type="GO" id="GO:0006261">
    <property type="term" value="P:DNA-templated DNA replication"/>
    <property type="evidence" value="ECO:0007669"/>
    <property type="project" value="UniProtKB-UniRule"/>
</dbReference>
<dbReference type="CDD" id="cd16928">
    <property type="entry name" value="HATPase_GyrB-like"/>
    <property type="match status" value="1"/>
</dbReference>
<dbReference type="CDD" id="cd00822">
    <property type="entry name" value="TopoII_Trans_DNA_gyrase"/>
    <property type="match status" value="1"/>
</dbReference>
<dbReference type="CDD" id="cd03366">
    <property type="entry name" value="TOPRIM_TopoIIA_GyrB"/>
    <property type="match status" value="1"/>
</dbReference>
<dbReference type="FunFam" id="3.30.230.10:FF:000005">
    <property type="entry name" value="DNA gyrase subunit B"/>
    <property type="match status" value="1"/>
</dbReference>
<dbReference type="FunFam" id="3.30.565.10:FF:000002">
    <property type="entry name" value="DNA gyrase subunit B"/>
    <property type="match status" value="1"/>
</dbReference>
<dbReference type="FunFam" id="3.40.50.670:FF:000002">
    <property type="entry name" value="DNA gyrase subunit B"/>
    <property type="match status" value="1"/>
</dbReference>
<dbReference type="Gene3D" id="3.30.230.10">
    <property type="match status" value="1"/>
</dbReference>
<dbReference type="Gene3D" id="3.40.50.670">
    <property type="match status" value="1"/>
</dbReference>
<dbReference type="Gene3D" id="3.30.565.10">
    <property type="entry name" value="Histidine kinase-like ATPase, C-terminal domain"/>
    <property type="match status" value="1"/>
</dbReference>
<dbReference type="HAMAP" id="MF_01898">
    <property type="entry name" value="GyrB"/>
    <property type="match status" value="1"/>
</dbReference>
<dbReference type="InterPro" id="IPR002288">
    <property type="entry name" value="DNA_gyrase_B_C"/>
</dbReference>
<dbReference type="InterPro" id="IPR011557">
    <property type="entry name" value="GyrB"/>
</dbReference>
<dbReference type="InterPro" id="IPR036890">
    <property type="entry name" value="HATPase_C_sf"/>
</dbReference>
<dbReference type="InterPro" id="IPR020568">
    <property type="entry name" value="Ribosomal_Su5_D2-typ_SF"/>
</dbReference>
<dbReference type="InterPro" id="IPR014721">
    <property type="entry name" value="Ribsml_uS5_D2-typ_fold_subgr"/>
</dbReference>
<dbReference type="InterPro" id="IPR001241">
    <property type="entry name" value="Topo_IIA"/>
</dbReference>
<dbReference type="InterPro" id="IPR013760">
    <property type="entry name" value="Topo_IIA-like_dom_sf"/>
</dbReference>
<dbReference type="InterPro" id="IPR000565">
    <property type="entry name" value="Topo_IIA_B"/>
</dbReference>
<dbReference type="InterPro" id="IPR013759">
    <property type="entry name" value="Topo_IIA_B_C"/>
</dbReference>
<dbReference type="InterPro" id="IPR013506">
    <property type="entry name" value="Topo_IIA_bsu_dom2"/>
</dbReference>
<dbReference type="InterPro" id="IPR018522">
    <property type="entry name" value="TopoIIA_CS"/>
</dbReference>
<dbReference type="InterPro" id="IPR006171">
    <property type="entry name" value="TOPRIM_dom"/>
</dbReference>
<dbReference type="InterPro" id="IPR034160">
    <property type="entry name" value="TOPRIM_GyrB"/>
</dbReference>
<dbReference type="NCBIfam" id="TIGR01059">
    <property type="entry name" value="gyrB"/>
    <property type="match status" value="1"/>
</dbReference>
<dbReference type="NCBIfam" id="NF004189">
    <property type="entry name" value="PRK05644.1"/>
    <property type="match status" value="1"/>
</dbReference>
<dbReference type="NCBIfam" id="NF011501">
    <property type="entry name" value="PRK14939.1"/>
    <property type="match status" value="1"/>
</dbReference>
<dbReference type="PANTHER" id="PTHR45866:SF1">
    <property type="entry name" value="DNA GYRASE SUBUNIT B, MITOCHONDRIAL"/>
    <property type="match status" value="1"/>
</dbReference>
<dbReference type="PANTHER" id="PTHR45866">
    <property type="entry name" value="DNA GYRASE/TOPOISOMERASE SUBUNIT B"/>
    <property type="match status" value="1"/>
</dbReference>
<dbReference type="Pfam" id="PF00204">
    <property type="entry name" value="DNA_gyraseB"/>
    <property type="match status" value="1"/>
</dbReference>
<dbReference type="Pfam" id="PF00986">
    <property type="entry name" value="DNA_gyraseB_C"/>
    <property type="match status" value="1"/>
</dbReference>
<dbReference type="Pfam" id="PF02518">
    <property type="entry name" value="HATPase_c"/>
    <property type="match status" value="1"/>
</dbReference>
<dbReference type="Pfam" id="PF01751">
    <property type="entry name" value="Toprim"/>
    <property type="match status" value="1"/>
</dbReference>
<dbReference type="PRINTS" id="PR01159">
    <property type="entry name" value="DNAGYRASEB"/>
</dbReference>
<dbReference type="PRINTS" id="PR00418">
    <property type="entry name" value="TPI2FAMILY"/>
</dbReference>
<dbReference type="SMART" id="SM00387">
    <property type="entry name" value="HATPase_c"/>
    <property type="match status" value="1"/>
</dbReference>
<dbReference type="SMART" id="SM00433">
    <property type="entry name" value="TOP2c"/>
    <property type="match status" value="1"/>
</dbReference>
<dbReference type="SUPFAM" id="SSF55874">
    <property type="entry name" value="ATPase domain of HSP90 chaperone/DNA topoisomerase II/histidine kinase"/>
    <property type="match status" value="1"/>
</dbReference>
<dbReference type="SUPFAM" id="SSF54211">
    <property type="entry name" value="Ribosomal protein S5 domain 2-like"/>
    <property type="match status" value="1"/>
</dbReference>
<dbReference type="SUPFAM" id="SSF56719">
    <property type="entry name" value="Type II DNA topoisomerase"/>
    <property type="match status" value="1"/>
</dbReference>
<dbReference type="PROSITE" id="PS00177">
    <property type="entry name" value="TOPOISOMERASE_II"/>
    <property type="match status" value="1"/>
</dbReference>
<dbReference type="PROSITE" id="PS50880">
    <property type="entry name" value="TOPRIM"/>
    <property type="match status" value="1"/>
</dbReference>
<keyword id="KW-0067">ATP-binding</keyword>
<keyword id="KW-0963">Cytoplasm</keyword>
<keyword id="KW-0238">DNA-binding</keyword>
<keyword id="KW-0413">Isomerase</keyword>
<keyword id="KW-0460">Magnesium</keyword>
<keyword id="KW-0479">Metal-binding</keyword>
<keyword id="KW-0547">Nucleotide-binding</keyword>
<keyword id="KW-1185">Reference proteome</keyword>
<keyword id="KW-0799">Topoisomerase</keyword>